<evidence type="ECO:0000255" key="1">
    <source>
        <dbReference type="HAMAP-Rule" id="MF_00294"/>
    </source>
</evidence>
<evidence type="ECO:0000305" key="2"/>
<accession>Q1R4V6</accession>
<comment type="similarity">
    <text evidence="1">Belongs to the bacterial ribosomal protein bL33 family.</text>
</comment>
<feature type="chain" id="PRO_1000004165" description="Large ribosomal subunit protein bL33">
    <location>
        <begin position="1"/>
        <end position="55"/>
    </location>
</feature>
<gene>
    <name evidence="1" type="primary">rpmG</name>
    <name type="ordered locus">UTI89_C4180</name>
</gene>
<organism>
    <name type="scientific">Escherichia coli (strain UTI89 / UPEC)</name>
    <dbReference type="NCBI Taxonomy" id="364106"/>
    <lineage>
        <taxon>Bacteria</taxon>
        <taxon>Pseudomonadati</taxon>
        <taxon>Pseudomonadota</taxon>
        <taxon>Gammaproteobacteria</taxon>
        <taxon>Enterobacterales</taxon>
        <taxon>Enterobacteriaceae</taxon>
        <taxon>Escherichia</taxon>
    </lineage>
</organism>
<protein>
    <recommendedName>
        <fullName evidence="1">Large ribosomal subunit protein bL33</fullName>
    </recommendedName>
    <alternativeName>
        <fullName evidence="2">50S ribosomal protein L33</fullName>
    </alternativeName>
</protein>
<proteinExistence type="inferred from homology"/>
<name>RL33_ECOUT</name>
<keyword id="KW-0687">Ribonucleoprotein</keyword>
<keyword id="KW-0689">Ribosomal protein</keyword>
<sequence>MAKGIREKIKLVSSAGTGHFYTTTKNKRTKPEKLELKKFDPVVRQHVIYKEAKIK</sequence>
<dbReference type="EMBL" id="CP000243">
    <property type="protein sequence ID" value="ABE09608.1"/>
    <property type="molecule type" value="Genomic_DNA"/>
</dbReference>
<dbReference type="RefSeq" id="WP_001051798.1">
    <property type="nucleotide sequence ID" value="NZ_CP064825.1"/>
</dbReference>
<dbReference type="SMR" id="Q1R4V6"/>
<dbReference type="GeneID" id="97607673"/>
<dbReference type="KEGG" id="eci:UTI89_C4180"/>
<dbReference type="HOGENOM" id="CLU_190949_1_1_6"/>
<dbReference type="Proteomes" id="UP000001952">
    <property type="component" value="Chromosome"/>
</dbReference>
<dbReference type="GO" id="GO:0022625">
    <property type="term" value="C:cytosolic large ribosomal subunit"/>
    <property type="evidence" value="ECO:0007669"/>
    <property type="project" value="TreeGrafter"/>
</dbReference>
<dbReference type="GO" id="GO:0003735">
    <property type="term" value="F:structural constituent of ribosome"/>
    <property type="evidence" value="ECO:0007669"/>
    <property type="project" value="InterPro"/>
</dbReference>
<dbReference type="GO" id="GO:0006412">
    <property type="term" value="P:translation"/>
    <property type="evidence" value="ECO:0007669"/>
    <property type="project" value="UniProtKB-UniRule"/>
</dbReference>
<dbReference type="FunFam" id="2.20.28.120:FF:000001">
    <property type="entry name" value="50S ribosomal protein L33"/>
    <property type="match status" value="1"/>
</dbReference>
<dbReference type="Gene3D" id="2.20.28.120">
    <property type="entry name" value="Ribosomal protein L33"/>
    <property type="match status" value="1"/>
</dbReference>
<dbReference type="HAMAP" id="MF_00294">
    <property type="entry name" value="Ribosomal_bL33"/>
    <property type="match status" value="1"/>
</dbReference>
<dbReference type="InterPro" id="IPR001705">
    <property type="entry name" value="Ribosomal_bL33"/>
</dbReference>
<dbReference type="InterPro" id="IPR018264">
    <property type="entry name" value="Ribosomal_bL33_CS"/>
</dbReference>
<dbReference type="InterPro" id="IPR038584">
    <property type="entry name" value="Ribosomal_bL33_sf"/>
</dbReference>
<dbReference type="InterPro" id="IPR011332">
    <property type="entry name" value="Ribosomal_zn-bd"/>
</dbReference>
<dbReference type="NCBIfam" id="NF001860">
    <property type="entry name" value="PRK00595.1"/>
    <property type="match status" value="1"/>
</dbReference>
<dbReference type="NCBIfam" id="TIGR01023">
    <property type="entry name" value="rpmG_bact"/>
    <property type="match status" value="1"/>
</dbReference>
<dbReference type="PANTHER" id="PTHR15238">
    <property type="entry name" value="54S RIBOSOMAL PROTEIN L39, MITOCHONDRIAL"/>
    <property type="match status" value="1"/>
</dbReference>
<dbReference type="PANTHER" id="PTHR15238:SF1">
    <property type="entry name" value="LARGE RIBOSOMAL SUBUNIT PROTEIN BL33M"/>
    <property type="match status" value="1"/>
</dbReference>
<dbReference type="Pfam" id="PF00471">
    <property type="entry name" value="Ribosomal_L33"/>
    <property type="match status" value="1"/>
</dbReference>
<dbReference type="SUPFAM" id="SSF57829">
    <property type="entry name" value="Zn-binding ribosomal proteins"/>
    <property type="match status" value="1"/>
</dbReference>
<dbReference type="PROSITE" id="PS00582">
    <property type="entry name" value="RIBOSOMAL_L33"/>
    <property type="match status" value="1"/>
</dbReference>
<reference key="1">
    <citation type="journal article" date="2006" name="Proc. Natl. Acad. Sci. U.S.A.">
        <title>Identification of genes subject to positive selection in uropathogenic strains of Escherichia coli: a comparative genomics approach.</title>
        <authorList>
            <person name="Chen S.L."/>
            <person name="Hung C.-S."/>
            <person name="Xu J."/>
            <person name="Reigstad C.S."/>
            <person name="Magrini V."/>
            <person name="Sabo A."/>
            <person name="Blasiar D."/>
            <person name="Bieri T."/>
            <person name="Meyer R.R."/>
            <person name="Ozersky P."/>
            <person name="Armstrong J.R."/>
            <person name="Fulton R.S."/>
            <person name="Latreille J.P."/>
            <person name="Spieth J."/>
            <person name="Hooton T.M."/>
            <person name="Mardis E.R."/>
            <person name="Hultgren S.J."/>
            <person name="Gordon J.I."/>
        </authorList>
    </citation>
    <scope>NUCLEOTIDE SEQUENCE [LARGE SCALE GENOMIC DNA]</scope>
    <source>
        <strain>UTI89 / UPEC</strain>
    </source>
</reference>